<name>PSBA_THEVL</name>
<comment type="function">
    <text evidence="1 3 5">Photosystem II (PSII) is a light-driven water:plastoquinone oxidoreductase that uses light energy to abstract electrons from H(2)O, generating O(2) and a proton gradient subsequently used for ATP formation. It consists of a core antenna complex that captures photons, and an electron transfer chain that converts photonic excitation into a charge separation. The D1/D2 (PsbA/PsbD) reaction center heterodimer binds P680, the primary electron donor of PSII as well as several subsequent electron acceptors.</text>
</comment>
<comment type="catalytic activity">
    <reaction evidence="1">
        <text>2 a plastoquinone + 4 hnu + 2 H2O = 2 a plastoquinol + O2</text>
        <dbReference type="Rhea" id="RHEA:36359"/>
        <dbReference type="Rhea" id="RHEA-COMP:9561"/>
        <dbReference type="Rhea" id="RHEA-COMP:9562"/>
        <dbReference type="ChEBI" id="CHEBI:15377"/>
        <dbReference type="ChEBI" id="CHEBI:15379"/>
        <dbReference type="ChEBI" id="CHEBI:17757"/>
        <dbReference type="ChEBI" id="CHEBI:30212"/>
        <dbReference type="ChEBI" id="CHEBI:62192"/>
        <dbReference type="EC" id="1.10.3.9"/>
    </reaction>
</comment>
<comment type="cofactor">
    <text evidence="1 2 3 4 5">The D1/D2 heterodimer binds P680, chlorophylls that are the primary electron donor of PSII, and subsequent electron acceptors. It shares a non-heme iron and each subunit binds pheophytin, quinone, additional chlorophylls, carotenoids and lipids. D1 provides most of the ligands for the Mn4-Ca-O5 cluster of the oxygen-evolving complex (OEC). There is also a Cl(-1) ion associated with D1 and D2, which is required for oxygen evolution. The PSII complex binds additional chlorophylls, carotenoids and specific lipids.</text>
</comment>
<comment type="subunit">
    <text evidence="1 2 3 4 5">PSII is composed of 1 copy each of membrane proteins PsbA, PsbB, PsbC, PsbD, PsbE, PsbF, PsbH, PsbI, PsbJ, PsbK, PsbL, PsbM, PsbT, PsbX, PsbY, PsbZ, Psb30/Ycf12, peripheral proteins PsbO, CyanoQ (PsbQ), PsbU, PsbV and a large number of cofactors. It forms dimeric complexes.</text>
</comment>
<comment type="subcellular location">
    <subcellularLocation>
        <location evidence="1 2 3 4 5">Cellular thylakoid membrane</location>
        <topology evidence="1 2 3 4 5">Multi-pass membrane protein</topology>
    </subcellularLocation>
</comment>
<comment type="PTM">
    <text evidence="1">C-terminally processed by CtpA; processing is essential to allow assembly of the oxygen-evolving complex and thus photosynthetic growth.</text>
</comment>
<comment type="PTM">
    <text evidence="1 4 6 8">Tyr-161 forms a radical intermediate that is referred to as redox-active TyrZ, YZ or Y-Z.</text>
</comment>
<comment type="miscellaneous">
    <text evidence="1 4">2 of the reaction center chlorophylls (ChlD1 and ChlD2) are entirely coordinated by water.</text>
</comment>
<comment type="miscellaneous">
    <text evidence="1 9">Cyanobacteria usually contain more than 2 copies of the psbA gene.</text>
</comment>
<comment type="miscellaneous">
    <text evidence="1">Herbicides such as atrazine, BNT, diuron or ioxynil bind in the Q(B) binding site and block subsequent electron transfer.</text>
</comment>
<comment type="similarity">
    <text evidence="1">Belongs to the reaction center PufL/M/PsbA/D family.</text>
</comment>
<keyword id="KW-0002">3D-structure</keyword>
<keyword id="KW-0106">Calcium</keyword>
<keyword id="KW-0148">Chlorophyll</keyword>
<keyword id="KW-0157">Chromophore</keyword>
<keyword id="KW-0249">Electron transport</keyword>
<keyword id="KW-0359">Herbicide resistance</keyword>
<keyword id="KW-0408">Iron</keyword>
<keyword id="KW-0460">Magnesium</keyword>
<keyword id="KW-0464">Manganese</keyword>
<keyword id="KW-0472">Membrane</keyword>
<keyword id="KW-0479">Metal-binding</keyword>
<keyword id="KW-0560">Oxidoreductase</keyword>
<keyword id="KW-0602">Photosynthesis</keyword>
<keyword id="KW-0604">Photosystem II</keyword>
<keyword id="KW-0793">Thylakoid</keyword>
<keyword id="KW-0812">Transmembrane</keyword>
<keyword id="KW-1133">Transmembrane helix</keyword>
<keyword id="KW-0813">Transport</keyword>
<proteinExistence type="evidence at protein level"/>
<reference key="1">
    <citation type="submission" date="1994-05" db="EMBL/GenBank/DDBJ databases">
        <title>Structure of the D1 subunit of photosystem II in the thermophyllic cyanobacterium Synechococcus vulcanus.</title>
        <authorList>
            <person name="Dibrov Y."/>
            <person name="Rahat A."/>
            <person name="Ohad N."/>
            <person name="Hirschberg J."/>
        </authorList>
    </citation>
    <scope>NUCLEOTIDE SEQUENCE [GENOMIC DNA]</scope>
    <source>
        <strain>Copeland</strain>
    </source>
</reference>
<reference key="2">
    <citation type="journal article" date="2003" name="Proc. Natl. Acad. Sci. U.S.A.">
        <title>Crystal structure of oxygen-evolving photosystem II from Thermosynechococcus vulcanus at 3.7-A resolution.</title>
        <authorList>
            <person name="Kamiya N."/>
            <person name="Shen J.-R."/>
        </authorList>
    </citation>
    <scope>X-RAY CRYSTALLOGRAPHY (3.7 ANGSTROMS) IN PHOTOSYSTEM II</scope>
    <scope>COFACTOR</scope>
    <scope>SUBUNIT</scope>
    <scope>SUBCELLULAR LOCATION</scope>
</reference>
<reference key="3">
    <citation type="journal article" date="2009" name="Proc. Natl. Acad. Sci. U.S.A.">
        <title>Location of chloride and its possible functions in oxygen-evolving photosystem II revealed by X-ray crystallography.</title>
        <authorList>
            <person name="Kawakami K."/>
            <person name="Umena Y."/>
            <person name="Kamiya N."/>
            <person name="Shen J.R."/>
        </authorList>
    </citation>
    <scope>X-RAY CRYSTALLOGRAPHY (3.7 ANGSTROMS) OF 1-344 IN COMPLEX WITH CHLOROPHYLL A AND PHEOPHYTIN A IN PHOTOSYSTEM II</scope>
    <scope>FUNCTION</scope>
    <scope>COFACTOR</scope>
    <scope>SUBUNIT</scope>
    <scope>SUBCELLULAR LOCATION</scope>
    <scope>POSSIBLE CL(-) LIGAND</scope>
</reference>
<reference key="4">
    <citation type="journal article" date="2011" name="Nature">
        <title>Crystal structure of oxygen-evolving photosystem II at a resolution of 1.9 A.</title>
        <authorList>
            <person name="Umena Y."/>
            <person name="Kawakami K."/>
            <person name="Shen J.R."/>
            <person name="Kamiya N."/>
        </authorList>
    </citation>
    <scope>X-RAY CRYSTALLOGRAPHY (1.9 ANGSTROMS) OF 1-344 IN COMPLEX WITH CA-4MN-5O CLUSTER; CHLOROPHYLL A AND PHEOPHYTIN A IN PHOTOSYSTEM II</scope>
    <scope>COFACTOR</scope>
    <scope>SUBUNIT</scope>
    <scope>SUBCELLULAR LOCATION</scope>
    <scope>TOPOLOGY</scope>
</reference>
<reference key="5">
    <citation type="journal article" date="2013" name="Proc. Natl. Acad. Sci. U.S.A.">
        <title>Structure of Sr-substituted photosystem II at 2.1 A resolution and its implications in the mechanism of water oxidation.</title>
        <authorList>
            <person name="Koua F.H."/>
            <person name="Umena Y."/>
            <person name="Kawakami K."/>
            <person name="Shen J.R."/>
        </authorList>
    </citation>
    <scope>X-RAY CRYSTALLOGRAPHY (2.1 ANGSTROMS) OF 11-344 IN PHOTOSYSTEM II</scope>
    <scope>FUNCTION</scope>
    <scope>COFACTOR</scope>
    <scope>SUBUNIT</scope>
    <scope>SUBCELLULAR LOCATION</scope>
</reference>
<sequence>MTTTLQRRESANLWERFCNWVTSTDNRLYVGWFGVIMIPTLLAATICFVIAFIAAPPVDIDGIREPVSGSLLYGNNIITGAVVPSSNAIGLHFYPIWEAASLDEWLYNGGPYQLIIFHFLLGASCYMGRQWELSYRLGMRPWICVAYSAPLASAFAVFLIYPIGQGSFSDGMPLGISGTFNFMIVFQAEHNILMHPFHQLGVAGVFGGALFCAMHGSLVTSSLIRETTETESANYGYKFGQEEETYNIVAAHGYFGRLIFQYASFNNSRSLHFFLAAWRVVGVWFAALGISTMAFNLNGFNFNHSVIDAKGNVINTWADIINRANLGMEVMHERNAHNFPLDLASAESAPVAMIAPSING</sequence>
<protein>
    <recommendedName>
        <fullName evidence="1">Photosystem II protein D1</fullName>
        <shortName evidence="1">PSII D1 protein</shortName>
        <ecNumber evidence="1">1.10.3.9</ecNumber>
    </recommendedName>
    <alternativeName>
        <fullName evidence="1">Photosystem II Q(B) protein</fullName>
    </alternativeName>
</protein>
<gene>
    <name evidence="1" type="primary">psbA</name>
    <name type="synonym">psbA-1</name>
</gene>
<feature type="chain" id="PRO_0000090491" description="Photosystem II protein D1" evidence="1">
    <location>
        <begin position="1"/>
        <end position="344"/>
    </location>
</feature>
<feature type="propeptide" id="PRO_0000316426" evidence="1">
    <location>
        <begin position="345"/>
        <end position="360"/>
    </location>
</feature>
<feature type="topological domain" description="Cytoplasmic" evidence="4">
    <location>
        <begin position="1"/>
        <end position="28"/>
    </location>
</feature>
<feature type="transmembrane region" description="Helical" evidence="1 4">
    <location>
        <begin position="29"/>
        <end position="46"/>
    </location>
</feature>
<feature type="topological domain" description="Lumenal" evidence="4">
    <location>
        <begin position="47"/>
        <end position="117"/>
    </location>
</feature>
<feature type="transmembrane region" description="Helical" evidence="1 4">
    <location>
        <begin position="118"/>
        <end position="133"/>
    </location>
</feature>
<feature type="topological domain" description="Cytoplasmic" evidence="4">
    <location>
        <begin position="134"/>
        <end position="141"/>
    </location>
</feature>
<feature type="transmembrane region" description="Helical" evidence="1 4">
    <location>
        <begin position="142"/>
        <end position="156"/>
    </location>
</feature>
<feature type="topological domain" description="Lumenal" evidence="4">
    <location>
        <begin position="157"/>
        <end position="196"/>
    </location>
</feature>
<feature type="transmembrane region" description="Helical" evidence="1 4">
    <location>
        <begin position="197"/>
        <end position="218"/>
    </location>
</feature>
<feature type="topological domain" description="Cytoplasmic" evidence="4">
    <location>
        <begin position="219"/>
        <end position="273"/>
    </location>
</feature>
<feature type="transmembrane region" description="Helical" evidence="1 4">
    <location>
        <begin position="274"/>
        <end position="288"/>
    </location>
</feature>
<feature type="topological domain" description="Lumenal" evidence="4">
    <location>
        <begin position="289"/>
        <end position="360"/>
    </location>
</feature>
<feature type="binding site" description="axial binding residue" evidence="1 4">
    <location>
        <position position="118"/>
    </location>
    <ligand>
        <name>chlorophyll a</name>
        <dbReference type="ChEBI" id="CHEBI:58416"/>
        <label>ChlzD1</label>
    </ligand>
    <ligandPart>
        <name>Mg</name>
        <dbReference type="ChEBI" id="CHEBI:25107"/>
    </ligandPart>
</feature>
<feature type="binding site" evidence="1 3 4 5">
    <location>
        <position position="126"/>
    </location>
    <ligand>
        <name>pheophytin a</name>
        <dbReference type="ChEBI" id="CHEBI:136840"/>
        <label>D1</label>
    </ligand>
</feature>
<feature type="binding site" evidence="4 5 7">
    <location>
        <position position="130"/>
    </location>
    <ligand>
        <name>pheophytin a</name>
        <dbReference type="ChEBI" id="CHEBI:136840"/>
        <label>D1</label>
    </ligand>
</feature>
<feature type="binding site" evidence="3 4 5">
    <location>
        <position position="147"/>
    </location>
    <ligand>
        <name>pheophytin a</name>
        <dbReference type="ChEBI" id="CHEBI:136840"/>
        <label>D1</label>
    </ligand>
</feature>
<feature type="binding site" evidence="1 4 5 6 7">
    <location>
        <position position="170"/>
    </location>
    <ligand>
        <name>[CaMn4O5] cluster</name>
        <dbReference type="ChEBI" id="CHEBI:189552"/>
    </ligand>
</feature>
<feature type="binding site" evidence="1 4 5 7">
    <location>
        <position position="189"/>
    </location>
    <ligand>
        <name>[CaMn4O5] cluster</name>
        <dbReference type="ChEBI" id="CHEBI:189552"/>
    </ligand>
</feature>
<feature type="binding site" description="axial binding residue" evidence="1 4 5">
    <location>
        <position position="198"/>
    </location>
    <ligand>
        <name>chlorophyll a</name>
        <dbReference type="ChEBI" id="CHEBI:58416"/>
        <label>PD1</label>
    </ligand>
    <ligandPart>
        <name>Mg</name>
        <dbReference type="ChEBI" id="CHEBI:25107"/>
    </ligandPart>
</feature>
<feature type="binding site" evidence="3 4">
    <location>
        <position position="214"/>
    </location>
    <ligand>
        <name>pheophytin a</name>
        <dbReference type="ChEBI" id="CHEBI:136840"/>
        <label>D1</label>
    </ligand>
</feature>
<feature type="binding site" evidence="1 4 5 7">
    <location>
        <position position="215"/>
    </location>
    <ligand>
        <name>a quinone</name>
        <dbReference type="ChEBI" id="CHEBI:132124"/>
        <label>B</label>
    </ligand>
</feature>
<feature type="binding site" evidence="1 4 5 7">
    <location>
        <position position="215"/>
    </location>
    <ligand>
        <name>Fe cation</name>
        <dbReference type="ChEBI" id="CHEBI:24875"/>
        <note>ligand shared with heterodimeric partner</note>
    </ligand>
</feature>
<feature type="binding site" evidence="1 4 5 7">
    <location>
        <begin position="264"/>
        <end position="265"/>
    </location>
    <ligand>
        <name>a quinone</name>
        <dbReference type="ChEBI" id="CHEBI:132124"/>
        <label>B</label>
    </ligand>
</feature>
<feature type="binding site" evidence="1 4 5 7">
    <location>
        <position position="272"/>
    </location>
    <ligand>
        <name>Fe cation</name>
        <dbReference type="ChEBI" id="CHEBI:24875"/>
        <note>ligand shared with heterodimeric partner</note>
    </ligand>
</feature>
<feature type="binding site" evidence="1 4 5 7">
    <location>
        <position position="332"/>
    </location>
    <ligand>
        <name>[CaMn4O5] cluster</name>
        <dbReference type="ChEBI" id="CHEBI:189552"/>
    </ligand>
</feature>
<feature type="binding site" evidence="1 4 5 7">
    <location>
        <position position="333"/>
    </location>
    <ligand>
        <name>[CaMn4O5] cluster</name>
        <dbReference type="ChEBI" id="CHEBI:189552"/>
    </ligand>
</feature>
<feature type="binding site" evidence="1 4 5 7">
    <location>
        <position position="342"/>
    </location>
    <ligand>
        <name>[CaMn4O5] cluster</name>
        <dbReference type="ChEBI" id="CHEBI:189552"/>
    </ligand>
</feature>
<feature type="binding site" evidence="1 4 5 6 7">
    <location>
        <position position="344"/>
    </location>
    <ligand>
        <name>[CaMn4O5] cluster</name>
        <dbReference type="ChEBI" id="CHEBI:189552"/>
    </ligand>
</feature>
<feature type="site" description="Tyrosine radical intermediate" evidence="1 4 6 8">
    <location>
        <position position="161"/>
    </location>
</feature>
<feature type="site" description="Stabilizes free radical intermediate" evidence="1">
    <location>
        <position position="190"/>
    </location>
</feature>
<feature type="site" description="Cleavage; by CtpA" evidence="1">
    <location>
        <begin position="344"/>
        <end position="345"/>
    </location>
</feature>
<feature type="helix" evidence="10">
    <location>
        <begin position="13"/>
        <end position="21"/>
    </location>
</feature>
<feature type="strand" evidence="10">
    <location>
        <begin position="26"/>
        <end position="28"/>
    </location>
</feature>
<feature type="helix" evidence="10">
    <location>
        <begin position="31"/>
        <end position="54"/>
    </location>
</feature>
<feature type="strand" evidence="10">
    <location>
        <begin position="62"/>
        <end position="64"/>
    </location>
</feature>
<feature type="helix" evidence="10">
    <location>
        <begin position="71"/>
        <end position="73"/>
    </location>
</feature>
<feature type="turn" evidence="10">
    <location>
        <begin position="77"/>
        <end position="79"/>
    </location>
</feature>
<feature type="turn" evidence="10">
    <location>
        <begin position="87"/>
        <end position="91"/>
    </location>
</feature>
<feature type="helix" evidence="10">
    <location>
        <begin position="96"/>
        <end position="98"/>
    </location>
</feature>
<feature type="strand" evidence="10">
    <location>
        <begin position="99"/>
        <end position="101"/>
    </location>
</feature>
<feature type="helix" evidence="10">
    <location>
        <begin position="102"/>
        <end position="107"/>
    </location>
</feature>
<feature type="helix" evidence="10">
    <location>
        <begin position="110"/>
        <end position="136"/>
    </location>
</feature>
<feature type="helix" evidence="10">
    <location>
        <begin position="143"/>
        <end position="158"/>
    </location>
</feature>
<feature type="helix" evidence="10">
    <location>
        <begin position="160"/>
        <end position="165"/>
    </location>
</feature>
<feature type="helix" evidence="10">
    <location>
        <begin position="168"/>
        <end position="170"/>
    </location>
</feature>
<feature type="helix" evidence="10">
    <location>
        <begin position="176"/>
        <end position="190"/>
    </location>
</feature>
<feature type="helix" evidence="10">
    <location>
        <begin position="192"/>
        <end position="194"/>
    </location>
</feature>
<feature type="helix" evidence="10">
    <location>
        <begin position="196"/>
        <end position="221"/>
    </location>
</feature>
<feature type="strand" evidence="12">
    <location>
        <begin position="225"/>
        <end position="227"/>
    </location>
</feature>
<feature type="strand" evidence="13">
    <location>
        <begin position="229"/>
        <end position="231"/>
    </location>
</feature>
<feature type="helix" evidence="10">
    <location>
        <begin position="233"/>
        <end position="236"/>
    </location>
</feature>
<feature type="helix" evidence="10">
    <location>
        <begin position="248"/>
        <end position="258"/>
    </location>
</feature>
<feature type="helix" evidence="10">
    <location>
        <begin position="261"/>
        <end position="263"/>
    </location>
</feature>
<feature type="helix" evidence="10">
    <location>
        <begin position="268"/>
        <end position="293"/>
    </location>
</feature>
<feature type="turn" evidence="10">
    <location>
        <begin position="294"/>
        <end position="296"/>
    </location>
</feature>
<feature type="strand" evidence="10">
    <location>
        <begin position="297"/>
        <end position="299"/>
    </location>
</feature>
<feature type="strand" evidence="12">
    <location>
        <begin position="306"/>
        <end position="308"/>
    </location>
</feature>
<feature type="strand" evidence="10">
    <location>
        <begin position="309"/>
        <end position="311"/>
    </location>
</feature>
<feature type="helix" evidence="10">
    <location>
        <begin position="317"/>
        <end position="331"/>
    </location>
</feature>
<feature type="turn" evidence="10">
    <location>
        <begin position="332"/>
        <end position="336"/>
    </location>
</feature>
<feature type="strand" evidence="11">
    <location>
        <begin position="339"/>
        <end position="341"/>
    </location>
</feature>
<organism>
    <name type="scientific">Thermostichus vulcanus</name>
    <name type="common">Synechococcus vulcanus</name>
    <dbReference type="NCBI Taxonomy" id="32053"/>
    <lineage>
        <taxon>Bacteria</taxon>
        <taxon>Bacillati</taxon>
        <taxon>Cyanobacteriota</taxon>
        <taxon>Cyanophyceae</taxon>
        <taxon>Thermostichales</taxon>
        <taxon>Thermostichaceae</taxon>
        <taxon>Thermostichus</taxon>
    </lineage>
</organism>
<accession>P51765</accession>
<evidence type="ECO:0000255" key="1">
    <source>
        <dbReference type="HAMAP-Rule" id="MF_01379"/>
    </source>
</evidence>
<evidence type="ECO:0000269" key="2">
    <source>
    </source>
</evidence>
<evidence type="ECO:0000269" key="3">
    <source>
    </source>
</evidence>
<evidence type="ECO:0000269" key="4">
    <source>
    </source>
</evidence>
<evidence type="ECO:0000269" key="5">
    <source>
    </source>
</evidence>
<evidence type="ECO:0000303" key="6">
    <source>
    </source>
</evidence>
<evidence type="ECO:0000303" key="7">
    <source>
    </source>
</evidence>
<evidence type="ECO:0000303" key="8">
    <source>
    </source>
</evidence>
<evidence type="ECO:0000305" key="9"/>
<evidence type="ECO:0007829" key="10">
    <source>
        <dbReference type="PDB" id="5B66"/>
    </source>
</evidence>
<evidence type="ECO:0007829" key="11">
    <source>
        <dbReference type="PDB" id="7D1T"/>
    </source>
</evidence>
<evidence type="ECO:0007829" key="12">
    <source>
        <dbReference type="PDB" id="7DXH"/>
    </source>
</evidence>
<evidence type="ECO:0007829" key="13">
    <source>
        <dbReference type="PDB" id="8GN0"/>
    </source>
</evidence>
<dbReference type="EC" id="1.10.3.9" evidence="1"/>
<dbReference type="EMBL" id="X79222">
    <property type="protein sequence ID" value="CAA55806.1"/>
    <property type="molecule type" value="Genomic_DNA"/>
</dbReference>
<dbReference type="PIR" id="S45009">
    <property type="entry name" value="S45009"/>
</dbReference>
<dbReference type="PDB" id="1IZL">
    <property type="method" value="X-ray"/>
    <property type="resolution" value="3.70 A"/>
    <property type="chains" value="A/J=1-360"/>
</dbReference>
<dbReference type="PDB" id="3A0B">
    <property type="method" value="X-ray"/>
    <property type="resolution" value="3.70 A"/>
    <property type="chains" value="A/a=1-344"/>
</dbReference>
<dbReference type="PDB" id="3A0H">
    <property type="method" value="X-ray"/>
    <property type="resolution" value="4.00 A"/>
    <property type="chains" value="A/a=1-344"/>
</dbReference>
<dbReference type="PDB" id="3WU2">
    <property type="method" value="X-ray"/>
    <property type="resolution" value="1.90 A"/>
    <property type="chains" value="A/a=1-344"/>
</dbReference>
<dbReference type="PDB" id="4IL6">
    <property type="method" value="X-ray"/>
    <property type="resolution" value="2.10 A"/>
    <property type="chains" value="A/a=11-344"/>
</dbReference>
<dbReference type="PDB" id="4UB6">
    <property type="method" value="X-ray"/>
    <property type="resolution" value="1.95 A"/>
    <property type="chains" value="A/a=1-344"/>
</dbReference>
<dbReference type="PDB" id="4UB8">
    <property type="method" value="X-ray"/>
    <property type="resolution" value="1.95 A"/>
    <property type="chains" value="A/a=1-344"/>
</dbReference>
<dbReference type="PDB" id="5B5E">
    <property type="method" value="X-ray"/>
    <property type="resolution" value="1.87 A"/>
    <property type="chains" value="A/a=1-344"/>
</dbReference>
<dbReference type="PDB" id="5B66">
    <property type="method" value="X-ray"/>
    <property type="resolution" value="1.85 A"/>
    <property type="chains" value="A/a=1-344"/>
</dbReference>
<dbReference type="PDB" id="5GTH">
    <property type="method" value="X-ray"/>
    <property type="resolution" value="2.50 A"/>
    <property type="chains" value="A/a=1-344"/>
</dbReference>
<dbReference type="PDB" id="5GTI">
    <property type="method" value="X-ray"/>
    <property type="resolution" value="2.50 A"/>
    <property type="chains" value="A/a=1-344"/>
</dbReference>
<dbReference type="PDB" id="5V2C">
    <property type="method" value="X-ray"/>
    <property type="resolution" value="1.90 A"/>
    <property type="chains" value="A/a=1-344"/>
</dbReference>
<dbReference type="PDB" id="5WS5">
    <property type="method" value="X-ray"/>
    <property type="resolution" value="2.35 A"/>
    <property type="chains" value="A/a=1-344"/>
</dbReference>
<dbReference type="PDB" id="5WS6">
    <property type="method" value="X-ray"/>
    <property type="resolution" value="2.35 A"/>
    <property type="chains" value="A/a=1-344"/>
</dbReference>
<dbReference type="PDB" id="6JLJ">
    <property type="method" value="X-ray"/>
    <property type="resolution" value="2.15 A"/>
    <property type="chains" value="A/a=1-344"/>
</dbReference>
<dbReference type="PDB" id="6JLK">
    <property type="method" value="X-ray"/>
    <property type="resolution" value="2.15 A"/>
    <property type="chains" value="A/a=1-344"/>
</dbReference>
<dbReference type="PDB" id="6JLL">
    <property type="method" value="X-ray"/>
    <property type="resolution" value="2.15 A"/>
    <property type="chains" value="A/a=1-344"/>
</dbReference>
<dbReference type="PDB" id="6JLM">
    <property type="method" value="X-ray"/>
    <property type="resolution" value="2.35 A"/>
    <property type="chains" value="A/a=1-344"/>
</dbReference>
<dbReference type="PDB" id="6JLN">
    <property type="method" value="X-ray"/>
    <property type="resolution" value="2.40 A"/>
    <property type="chains" value="A/a=1-344"/>
</dbReference>
<dbReference type="PDB" id="6JLO">
    <property type="method" value="X-ray"/>
    <property type="resolution" value="2.40 A"/>
    <property type="chains" value="A/a=1-344"/>
</dbReference>
<dbReference type="PDB" id="6JLP">
    <property type="method" value="X-ray"/>
    <property type="resolution" value="2.50 A"/>
    <property type="chains" value="A/a=1-344"/>
</dbReference>
<dbReference type="PDB" id="7CJI">
    <property type="method" value="X-ray"/>
    <property type="resolution" value="2.35 A"/>
    <property type="chains" value="A/a=1-344"/>
</dbReference>
<dbReference type="PDB" id="7CJJ">
    <property type="method" value="X-ray"/>
    <property type="resolution" value="2.40 A"/>
    <property type="chains" value="A/a=1-344"/>
</dbReference>
<dbReference type="PDB" id="7COU">
    <property type="method" value="X-ray"/>
    <property type="resolution" value="2.25 A"/>
    <property type="chains" value="A/a=1-344"/>
</dbReference>
<dbReference type="PDB" id="7CZL">
    <property type="method" value="EM"/>
    <property type="resolution" value="3.78 A"/>
    <property type="chains" value="A/a=10-333"/>
</dbReference>
<dbReference type="PDB" id="7D1T">
    <property type="method" value="EM"/>
    <property type="resolution" value="1.95 A"/>
    <property type="chains" value="A/a=11-344"/>
</dbReference>
<dbReference type="PDB" id="7D1U">
    <property type="method" value="EM"/>
    <property type="resolution" value="2.08 A"/>
    <property type="chains" value="A/a=11-344"/>
</dbReference>
<dbReference type="PDB" id="7DXA">
    <property type="method" value="EM"/>
    <property type="resolution" value="3.14 A"/>
    <property type="chains" value="a=1-360"/>
</dbReference>
<dbReference type="PDB" id="7DXH">
    <property type="method" value="EM"/>
    <property type="resolution" value="3.14 A"/>
    <property type="chains" value="a=1-360"/>
</dbReference>
<dbReference type="PDB" id="7EDA">
    <property type="method" value="EM"/>
    <property type="resolution" value="2.78 A"/>
    <property type="chains" value="A=11-344"/>
</dbReference>
<dbReference type="PDB" id="8GN0">
    <property type="method" value="X-ray"/>
    <property type="resolution" value="2.15 A"/>
    <property type="chains" value="A/a=1-344"/>
</dbReference>
<dbReference type="PDB" id="8GN1">
    <property type="method" value="X-ray"/>
    <property type="resolution" value="2.10 A"/>
    <property type="chains" value="A/a=1-344"/>
</dbReference>
<dbReference type="PDB" id="8GN2">
    <property type="method" value="X-ray"/>
    <property type="resolution" value="1.95 A"/>
    <property type="chains" value="A/a=1-344"/>
</dbReference>
<dbReference type="PDB" id="8IR5">
    <property type="method" value="X-ray"/>
    <property type="resolution" value="2.15 A"/>
    <property type="chains" value="A/a=1-344"/>
</dbReference>
<dbReference type="PDB" id="8IR6">
    <property type="method" value="X-ray"/>
    <property type="resolution" value="2.20 A"/>
    <property type="chains" value="A/a=1-344"/>
</dbReference>
<dbReference type="PDB" id="8IR7">
    <property type="method" value="X-ray"/>
    <property type="resolution" value="2.25 A"/>
    <property type="chains" value="A/a=1-344"/>
</dbReference>
<dbReference type="PDB" id="8IR8">
    <property type="method" value="X-ray"/>
    <property type="resolution" value="2.25 A"/>
    <property type="chains" value="A/a=1-344"/>
</dbReference>
<dbReference type="PDB" id="8IR9">
    <property type="method" value="X-ray"/>
    <property type="resolution" value="2.20 A"/>
    <property type="chains" value="A/a=1-344"/>
</dbReference>
<dbReference type="PDB" id="8IRA">
    <property type="method" value="X-ray"/>
    <property type="resolution" value="2.20 A"/>
    <property type="chains" value="A/a=1-344"/>
</dbReference>
<dbReference type="PDB" id="8IRB">
    <property type="method" value="X-ray"/>
    <property type="resolution" value="2.30 A"/>
    <property type="chains" value="A/a=1-344"/>
</dbReference>
<dbReference type="PDB" id="8IRC">
    <property type="method" value="X-ray"/>
    <property type="resolution" value="2.25 A"/>
    <property type="chains" value="A/a=1-344"/>
</dbReference>
<dbReference type="PDB" id="8IRD">
    <property type="method" value="X-ray"/>
    <property type="resolution" value="2.30 A"/>
    <property type="chains" value="A/a=1-344"/>
</dbReference>
<dbReference type="PDB" id="8IRE">
    <property type="method" value="X-ray"/>
    <property type="resolution" value="2.25 A"/>
    <property type="chains" value="A/a=1-344"/>
</dbReference>
<dbReference type="PDB" id="8IRF">
    <property type="method" value="X-ray"/>
    <property type="resolution" value="2.25 A"/>
    <property type="chains" value="A/a=1-344"/>
</dbReference>
<dbReference type="PDB" id="8IRG">
    <property type="method" value="X-ray"/>
    <property type="resolution" value="2.30 A"/>
    <property type="chains" value="A/a=1-344"/>
</dbReference>
<dbReference type="PDB" id="8IRH">
    <property type="method" value="X-ray"/>
    <property type="resolution" value="2.25 A"/>
    <property type="chains" value="A/a=1-344"/>
</dbReference>
<dbReference type="PDB" id="8IRI">
    <property type="method" value="X-ray"/>
    <property type="resolution" value="2.25 A"/>
    <property type="chains" value="A/a=1-344"/>
</dbReference>
<dbReference type="PDBsum" id="1IZL"/>
<dbReference type="PDBsum" id="3A0B"/>
<dbReference type="PDBsum" id="3A0H"/>
<dbReference type="PDBsum" id="3WU2"/>
<dbReference type="PDBsum" id="4IL6"/>
<dbReference type="PDBsum" id="4UB6"/>
<dbReference type="PDBsum" id="4UB8"/>
<dbReference type="PDBsum" id="5B5E"/>
<dbReference type="PDBsum" id="5B66"/>
<dbReference type="PDBsum" id="5GTH"/>
<dbReference type="PDBsum" id="5GTI"/>
<dbReference type="PDBsum" id="5V2C"/>
<dbReference type="PDBsum" id="5WS5"/>
<dbReference type="PDBsum" id="5WS6"/>
<dbReference type="PDBsum" id="6JLJ"/>
<dbReference type="PDBsum" id="6JLK"/>
<dbReference type="PDBsum" id="6JLL"/>
<dbReference type="PDBsum" id="6JLM"/>
<dbReference type="PDBsum" id="6JLN"/>
<dbReference type="PDBsum" id="6JLO"/>
<dbReference type="PDBsum" id="6JLP"/>
<dbReference type="PDBsum" id="7CJI"/>
<dbReference type="PDBsum" id="7CJJ"/>
<dbReference type="PDBsum" id="7COU"/>
<dbReference type="PDBsum" id="7CZL"/>
<dbReference type="PDBsum" id="7D1T"/>
<dbReference type="PDBsum" id="7D1U"/>
<dbReference type="PDBsum" id="7DXA"/>
<dbReference type="PDBsum" id="7DXH"/>
<dbReference type="PDBsum" id="7EDA"/>
<dbReference type="PDBsum" id="8GN0"/>
<dbReference type="PDBsum" id="8GN1"/>
<dbReference type="PDBsum" id="8GN2"/>
<dbReference type="PDBsum" id="8IR5"/>
<dbReference type="PDBsum" id="8IR6"/>
<dbReference type="PDBsum" id="8IR7"/>
<dbReference type="PDBsum" id="8IR8"/>
<dbReference type="PDBsum" id="8IR9"/>
<dbReference type="PDBsum" id="8IRA"/>
<dbReference type="PDBsum" id="8IRB"/>
<dbReference type="PDBsum" id="8IRC"/>
<dbReference type="PDBsum" id="8IRD"/>
<dbReference type="PDBsum" id="8IRE"/>
<dbReference type="PDBsum" id="8IRF"/>
<dbReference type="PDBsum" id="8IRG"/>
<dbReference type="PDBsum" id="8IRH"/>
<dbReference type="PDBsum" id="8IRI"/>
<dbReference type="EMDB" id="EMD-30511"/>
<dbReference type="EMDB" id="EMD-30547"/>
<dbReference type="EMDB" id="EMD-30548"/>
<dbReference type="EMDB" id="EMD-30902"/>
<dbReference type="EMDB" id="EMD-30909"/>
<dbReference type="EMDB" id="EMD-31062"/>
<dbReference type="SMR" id="P51765"/>
<dbReference type="DIP" id="DIP-48859N"/>
<dbReference type="IntAct" id="P51765">
    <property type="interactions" value="1"/>
</dbReference>
<dbReference type="EvolutionaryTrace" id="P51765"/>
<dbReference type="GO" id="GO:0009523">
    <property type="term" value="C:photosystem II"/>
    <property type="evidence" value="ECO:0007669"/>
    <property type="project" value="UniProtKB-KW"/>
</dbReference>
<dbReference type="GO" id="GO:0031676">
    <property type="term" value="C:plasma membrane-derived thylakoid membrane"/>
    <property type="evidence" value="ECO:0007669"/>
    <property type="project" value="UniProtKB-SubCell"/>
</dbReference>
<dbReference type="GO" id="GO:0016168">
    <property type="term" value="F:chlorophyll binding"/>
    <property type="evidence" value="ECO:0007669"/>
    <property type="project" value="UniProtKB-UniRule"/>
</dbReference>
<dbReference type="GO" id="GO:0045156">
    <property type="term" value="F:electron transporter, transferring electrons within the cyclic electron transport pathway of photosynthesis activity"/>
    <property type="evidence" value="ECO:0007669"/>
    <property type="project" value="InterPro"/>
</dbReference>
<dbReference type="GO" id="GO:0005506">
    <property type="term" value="F:iron ion binding"/>
    <property type="evidence" value="ECO:0007669"/>
    <property type="project" value="UniProtKB-UniRule"/>
</dbReference>
<dbReference type="GO" id="GO:0016682">
    <property type="term" value="F:oxidoreductase activity, acting on diphenols and related substances as donors, oxygen as acceptor"/>
    <property type="evidence" value="ECO:0007669"/>
    <property type="project" value="UniProtKB-UniRule"/>
</dbReference>
<dbReference type="GO" id="GO:0010242">
    <property type="term" value="F:oxygen evolving activity"/>
    <property type="evidence" value="ECO:0007669"/>
    <property type="project" value="UniProtKB-EC"/>
</dbReference>
<dbReference type="GO" id="GO:0009772">
    <property type="term" value="P:photosynthetic electron transport in photosystem II"/>
    <property type="evidence" value="ECO:0007669"/>
    <property type="project" value="InterPro"/>
</dbReference>
<dbReference type="GO" id="GO:0009635">
    <property type="term" value="P:response to herbicide"/>
    <property type="evidence" value="ECO:0007669"/>
    <property type="project" value="UniProtKB-KW"/>
</dbReference>
<dbReference type="CDD" id="cd09289">
    <property type="entry name" value="Photosystem-II_D1"/>
    <property type="match status" value="1"/>
</dbReference>
<dbReference type="FunFam" id="1.20.85.10:FF:000002">
    <property type="entry name" value="Photosystem II protein D1"/>
    <property type="match status" value="1"/>
</dbReference>
<dbReference type="Gene3D" id="1.20.85.10">
    <property type="entry name" value="Photosystem II protein D1-like"/>
    <property type="match status" value="1"/>
</dbReference>
<dbReference type="HAMAP" id="MF_01379">
    <property type="entry name" value="PSII_PsbA_D1"/>
    <property type="match status" value="1"/>
</dbReference>
<dbReference type="InterPro" id="IPR055266">
    <property type="entry name" value="D1/D2"/>
</dbReference>
<dbReference type="InterPro" id="IPR036854">
    <property type="entry name" value="Photo_II_D1/D2_sf"/>
</dbReference>
<dbReference type="InterPro" id="IPR000484">
    <property type="entry name" value="Photo_RC_L/M"/>
</dbReference>
<dbReference type="InterPro" id="IPR055265">
    <property type="entry name" value="Photo_RC_L/M_CS"/>
</dbReference>
<dbReference type="InterPro" id="IPR005867">
    <property type="entry name" value="PSII_D1"/>
</dbReference>
<dbReference type="NCBIfam" id="TIGR01151">
    <property type="entry name" value="psbA"/>
    <property type="match status" value="1"/>
</dbReference>
<dbReference type="PANTHER" id="PTHR33149:SF12">
    <property type="entry name" value="PHOTOSYSTEM II D2 PROTEIN"/>
    <property type="match status" value="1"/>
</dbReference>
<dbReference type="PANTHER" id="PTHR33149">
    <property type="entry name" value="PHOTOSYSTEM II PROTEIN D1"/>
    <property type="match status" value="1"/>
</dbReference>
<dbReference type="Pfam" id="PF00124">
    <property type="entry name" value="Photo_RC"/>
    <property type="match status" value="1"/>
</dbReference>
<dbReference type="SUPFAM" id="SSF81483">
    <property type="entry name" value="Bacterial photosystem II reaction centre, L and M subunits"/>
    <property type="match status" value="1"/>
</dbReference>
<dbReference type="PROSITE" id="PS00244">
    <property type="entry name" value="REACTION_CENTER"/>
    <property type="match status" value="1"/>
</dbReference>